<feature type="chain" id="PRO_1000010389" description="Heat-inducible transcription repressor HrcA">
    <location>
        <begin position="1"/>
        <end position="340"/>
    </location>
</feature>
<dbReference type="EMBL" id="CP000086">
    <property type="protein sequence ID" value="ABC39268.1"/>
    <property type="molecule type" value="Genomic_DNA"/>
</dbReference>
<dbReference type="RefSeq" id="WP_009889243.1">
    <property type="nucleotide sequence ID" value="NZ_CP008785.1"/>
</dbReference>
<dbReference type="SMR" id="Q2SZ00"/>
<dbReference type="DNASU" id="3849148"/>
<dbReference type="GeneID" id="45121047"/>
<dbReference type="KEGG" id="bte:BTH_I1302"/>
<dbReference type="HOGENOM" id="CLU_050019_0_0_4"/>
<dbReference type="Proteomes" id="UP000001930">
    <property type="component" value="Chromosome I"/>
</dbReference>
<dbReference type="GO" id="GO:0003677">
    <property type="term" value="F:DNA binding"/>
    <property type="evidence" value="ECO:0007669"/>
    <property type="project" value="InterPro"/>
</dbReference>
<dbReference type="GO" id="GO:0045892">
    <property type="term" value="P:negative regulation of DNA-templated transcription"/>
    <property type="evidence" value="ECO:0007669"/>
    <property type="project" value="UniProtKB-UniRule"/>
</dbReference>
<dbReference type="Gene3D" id="3.30.450.40">
    <property type="match status" value="1"/>
</dbReference>
<dbReference type="Gene3D" id="3.30.390.60">
    <property type="entry name" value="Heat-inducible transcription repressor hrca homolog, domain 3"/>
    <property type="match status" value="1"/>
</dbReference>
<dbReference type="Gene3D" id="1.10.10.10">
    <property type="entry name" value="Winged helix-like DNA-binding domain superfamily/Winged helix DNA-binding domain"/>
    <property type="match status" value="1"/>
</dbReference>
<dbReference type="HAMAP" id="MF_00081">
    <property type="entry name" value="HrcA"/>
    <property type="match status" value="1"/>
</dbReference>
<dbReference type="InterPro" id="IPR029016">
    <property type="entry name" value="GAF-like_dom_sf"/>
</dbReference>
<dbReference type="InterPro" id="IPR002571">
    <property type="entry name" value="HrcA"/>
</dbReference>
<dbReference type="InterPro" id="IPR021153">
    <property type="entry name" value="HrcA_C"/>
</dbReference>
<dbReference type="InterPro" id="IPR036388">
    <property type="entry name" value="WH-like_DNA-bd_sf"/>
</dbReference>
<dbReference type="InterPro" id="IPR036390">
    <property type="entry name" value="WH_DNA-bd_sf"/>
</dbReference>
<dbReference type="InterPro" id="IPR005104">
    <property type="entry name" value="WHTH_HrcA_DNA-bd"/>
</dbReference>
<dbReference type="InterPro" id="IPR023120">
    <property type="entry name" value="WHTH_transcript_rep_HrcA_IDD"/>
</dbReference>
<dbReference type="NCBIfam" id="TIGR00331">
    <property type="entry name" value="hrcA"/>
    <property type="match status" value="1"/>
</dbReference>
<dbReference type="PANTHER" id="PTHR34824">
    <property type="entry name" value="HEAT-INDUCIBLE TRANSCRIPTION REPRESSOR HRCA"/>
    <property type="match status" value="1"/>
</dbReference>
<dbReference type="PANTHER" id="PTHR34824:SF1">
    <property type="entry name" value="HEAT-INDUCIBLE TRANSCRIPTION REPRESSOR HRCA"/>
    <property type="match status" value="1"/>
</dbReference>
<dbReference type="Pfam" id="PF01628">
    <property type="entry name" value="HrcA"/>
    <property type="match status" value="1"/>
</dbReference>
<dbReference type="Pfam" id="PF03444">
    <property type="entry name" value="HrcA_DNA-bdg"/>
    <property type="match status" value="1"/>
</dbReference>
<dbReference type="PIRSF" id="PIRSF005485">
    <property type="entry name" value="HrcA"/>
    <property type="match status" value="1"/>
</dbReference>
<dbReference type="SUPFAM" id="SSF55781">
    <property type="entry name" value="GAF domain-like"/>
    <property type="match status" value="1"/>
</dbReference>
<dbReference type="SUPFAM" id="SSF46785">
    <property type="entry name" value="Winged helix' DNA-binding domain"/>
    <property type="match status" value="1"/>
</dbReference>
<accession>Q2SZ00</accession>
<reference key="1">
    <citation type="journal article" date="2005" name="BMC Genomics">
        <title>Bacterial genome adaptation to niches: divergence of the potential virulence genes in three Burkholderia species of different survival strategies.</title>
        <authorList>
            <person name="Kim H.S."/>
            <person name="Schell M.A."/>
            <person name="Yu Y."/>
            <person name="Ulrich R.L."/>
            <person name="Sarria S.H."/>
            <person name="Nierman W.C."/>
            <person name="DeShazer D."/>
        </authorList>
    </citation>
    <scope>NUCLEOTIDE SEQUENCE [LARGE SCALE GENOMIC DNA]</scope>
    <source>
        <strain>ATCC 700388 / DSM 13276 / CCUG 48851 / CIP 106301 / E264</strain>
    </source>
</reference>
<proteinExistence type="inferred from homology"/>
<organism>
    <name type="scientific">Burkholderia thailandensis (strain ATCC 700388 / DSM 13276 / CCUG 48851 / CIP 106301 / E264)</name>
    <dbReference type="NCBI Taxonomy" id="271848"/>
    <lineage>
        <taxon>Bacteria</taxon>
        <taxon>Pseudomonadati</taxon>
        <taxon>Pseudomonadota</taxon>
        <taxon>Betaproteobacteria</taxon>
        <taxon>Burkholderiales</taxon>
        <taxon>Burkholderiaceae</taxon>
        <taxon>Burkholderia</taxon>
        <taxon>pseudomallei group</taxon>
    </lineage>
</organism>
<protein>
    <recommendedName>
        <fullName evidence="1">Heat-inducible transcription repressor HrcA</fullName>
    </recommendedName>
</protein>
<name>HRCA_BURTA</name>
<evidence type="ECO:0000255" key="1">
    <source>
        <dbReference type="HAMAP-Rule" id="MF_00081"/>
    </source>
</evidence>
<comment type="function">
    <text evidence="1">Negative regulator of class I heat shock genes (grpE-dnaK-dnaJ and groELS operons). Prevents heat-shock induction of these operons.</text>
</comment>
<comment type="similarity">
    <text evidence="1">Belongs to the HrcA family.</text>
</comment>
<keyword id="KW-0678">Repressor</keyword>
<keyword id="KW-0346">Stress response</keyword>
<keyword id="KW-0804">Transcription</keyword>
<keyword id="KW-0805">Transcription regulation</keyword>
<sequence>MLDPRARTLLKTLIERYIADGQPVGSRTLSRYSGLELSPATIRNVMSDLEELGLVSSPHTSAGRVPTPRGYRLFVDTMLTVESPIDSDAVTRLVQTTLQAGEPQQKVVAAAASVLSNLSQFAGVVLTPRRSHVFKQIEFLRLSDKRILLIIVTPEGDVQNRMIATQRDYSPAQLTEASNYINAHFAGLSFDEVRRRLRGEIDELRGDMTALMHAAVTASTEEPADEETVLISGERNLLEVADLSSDMARLRKLFDVFDQKTSLLQLLDVSSHAQGVQIFIGGESTLVPIDEMSVVTAPYEVNGKIVGTLGVIGPTRMAYNRVIPIVDITARLLSLTLSQQ</sequence>
<gene>
    <name evidence="1" type="primary">hrcA</name>
    <name type="ordered locus">BTH_I1302</name>
</gene>